<comment type="function">
    <text evidence="5 7">Exocellobiohydrolases (CBH) that catalyzes the hydrolysis of 1,4-beta-D-glucosidic bonds in cellulose to release the disaccharide cellobiose (PubMed:21876370). The degradation of cellulose involves an interplay between different cellulolytic enzymes. Hydrolysis starts with endoglucanases (EGs), which cut internal beta-1,4-glucosidic bonds in cellulose to reduce the polymerization degree of the substrate and create new chain ends for exocellobiohydrolases (CBHs). The CBHs release the disaccharide cellobiose from the non-reducing end of the cellulose polymer chain. Finally, beta-1,4-glucosidases hydrolyze the cellobiose and other short cello-oligosaccharides into glucose units (Probable).</text>
</comment>
<comment type="catalytic activity">
    <reaction evidence="5 6">
        <text>Hydrolysis of (1-&gt;4)-beta-D-glucosidic linkages in cellulose and cellotetraose, releasing cellobiose from the non-reducing ends of the chains.</text>
        <dbReference type="EC" id="3.2.1.91"/>
    </reaction>
</comment>
<comment type="biophysicochemical properties">
    <kinetics>
        <KM evidence="6">3.4 mM for p-nitrophenyl-D-cellobioside</KM>
        <KM evidence="6">3.7 mM for 2-chloro-4-nitrophenyl-beta-lactoside</KM>
        <Vmax evidence="6">0.016 mmol/min/mg enzyme for p-nitrophenyl-D-cellobioside</Vmax>
        <Vmax evidence="6">0.031 mmol/min/mg enzyme for 2-chloro-4-nitrophenyl-beta-lactoside</Vmax>
        <text evidence="6">kcat is 23.2 min(-1) with p-nitrophenyl-D-cellobioside as substrate and 44.6 min(-1) with 2-chloro-4-nitrophenyl-beta-lactoside as substrate.</text>
    </kinetics>
    <phDependence>
        <text evidence="5">Optimum pH is 5.0.</text>
    </phDependence>
    <temperatureDependence>
        <text evidence="5">Optimum temperature is 50 degrees Celsius.</text>
    </temperatureDependence>
</comment>
<comment type="subcellular location">
    <subcellularLocation>
        <location evidence="5">Secreted</location>
    </subcellularLocation>
</comment>
<comment type="domain">
    <text evidence="1">The enzyme consists of two functional domains, a catalytic core joined to a carbohydrate-binding domain (CBM) by a serine-, threonine-, and proline-rich, highly glycosylated linker sequence.</text>
</comment>
<comment type="PTM">
    <text evidence="1">O-glycosylated. O-glycosylation of the cellulase linker provides protection from proteolysis. Linker glycans also contribute to binding affinity of cellobiohydrolases to cellulose.</text>
</comment>
<comment type="similarity">
    <text evidence="7">Belongs to the glycosyl hydrolase 7 (cellulase C) family.</text>
</comment>
<reference key="1">
    <citation type="journal article" date="1999" name="J. Minn. Acad. Sci.">
        <title>Cloning and sequencing of a cellobiohydrolase gene from Trichoderma harzianum FP 108.</title>
        <authorList>
            <person name="Guilfoile P.G."/>
            <person name="Burns R."/>
            <person name="Gu Z.-Y."/>
            <person name="Amundson M."/>
            <person name="Chang F.-H."/>
        </authorList>
    </citation>
    <scope>NUCLEOTIDE SEQUENCE [GENOMIC DNA]</scope>
    <source>
        <strain>FP 108</strain>
    </source>
</reference>
<reference key="2">
    <citation type="journal article" date="2011" name="J. Microbiol. Biotechnol.">
        <title>Purification, and biochemical and biophysical characterization of cellobiohydrolase I from Trichoderma harzianum IOC 3844.</title>
        <authorList>
            <person name="Colussi F."/>
            <person name="Serpa V."/>
            <person name="Delabona P.D.S."/>
            <person name="Manzine L.R."/>
            <person name="Voltatodio M.L."/>
            <person name="Alves R."/>
            <person name="Mello B.L."/>
            <person name="Pereira N. Jr."/>
            <person name="Farinas C.S."/>
            <person name="Golubev A.M."/>
            <person name="Santos M.A."/>
            <person name="Polikarpov I."/>
        </authorList>
    </citation>
    <scope>FUNCTION</scope>
    <scope>CATALYTIC ACTIVITY</scope>
    <scope>BIOPHYSICOCHEMICAL PROPERTIES</scope>
    <scope>SUBCELLULAR LOCATION</scope>
    <source>
        <strain>IOC 3844</strain>
    </source>
</reference>
<reference key="3">
    <citation type="journal article" date="2013" name="FEBS J.">
        <title>Joint X-ray crystallographic and molecular dynamics study of cellobiohydrolase I from Trichoderma harzianum: deciphering the structural features of cellobiohydrolase catalytic activity.</title>
        <authorList>
            <person name="Textor L.C."/>
            <person name="Colussi F."/>
            <person name="Silveira R.L."/>
            <person name="Serpa V."/>
            <person name="de Mello B.L."/>
            <person name="Muniz J.R."/>
            <person name="Squina F.M."/>
            <person name="Pereira N. Jr."/>
            <person name="Skaf M.S."/>
            <person name="Polikarpov I."/>
        </authorList>
    </citation>
    <scope>X-RAY CRYSTALLOGRAPHY (1.67 ANGSTROMS) OF 19-443</scope>
    <scope>FUNCTION</scope>
    <scope>CATALYTIC ACTIVITY</scope>
    <scope>BIOPHYSICOCHEMICAL PROPERTIES</scope>
    <scope>GLYCOSYLATION AT ASN-126 AND ASN-397</scope>
    <scope>PYROGLUTAMATE FORMATION AT GLN-18</scope>
    <scope>DISULFIDE BONDS</scope>
    <source>
        <strain>IOC 3844</strain>
    </source>
</reference>
<dbReference type="EC" id="3.2.1.91"/>
<dbReference type="EMBL" id="AF223252">
    <property type="protein sequence ID" value="AAF36391.1"/>
    <property type="molecule type" value="Genomic_DNA"/>
</dbReference>
<dbReference type="PDB" id="2Y9N">
    <property type="method" value="X-ray"/>
    <property type="resolution" value="2.89 A"/>
    <property type="chains" value="A=19-449"/>
</dbReference>
<dbReference type="PDB" id="2YOK">
    <property type="method" value="X-ray"/>
    <property type="resolution" value="1.67 A"/>
    <property type="chains" value="A=19-443"/>
</dbReference>
<dbReference type="PDBsum" id="2Y9N"/>
<dbReference type="PDBsum" id="2YOK"/>
<dbReference type="SMR" id="Q9P8P3"/>
<dbReference type="CAZy" id="CBM1">
    <property type="family name" value="Carbohydrate-Binding Module Family 1"/>
</dbReference>
<dbReference type="CAZy" id="GH7">
    <property type="family name" value="Glycoside Hydrolase Family 7"/>
</dbReference>
<dbReference type="GlyCosmos" id="Q9P8P3">
    <property type="glycosylation" value="4 sites, No reported glycans"/>
</dbReference>
<dbReference type="iPTMnet" id="Q9P8P3"/>
<dbReference type="BRENDA" id="3.2.1.176">
    <property type="organism ID" value="6445"/>
</dbReference>
<dbReference type="EvolutionaryTrace" id="Q9P8P3"/>
<dbReference type="GO" id="GO:0005576">
    <property type="term" value="C:extracellular region"/>
    <property type="evidence" value="ECO:0007669"/>
    <property type="project" value="UniProtKB-SubCell"/>
</dbReference>
<dbReference type="GO" id="GO:0016162">
    <property type="term" value="F:cellulose 1,4-beta-cellobiosidase activity"/>
    <property type="evidence" value="ECO:0007669"/>
    <property type="project" value="UniProtKB-EC"/>
</dbReference>
<dbReference type="GO" id="GO:0030248">
    <property type="term" value="F:cellulose binding"/>
    <property type="evidence" value="ECO:0007669"/>
    <property type="project" value="InterPro"/>
</dbReference>
<dbReference type="GO" id="GO:0030245">
    <property type="term" value="P:cellulose catabolic process"/>
    <property type="evidence" value="ECO:0007669"/>
    <property type="project" value="UniProtKB-KW"/>
</dbReference>
<dbReference type="CDD" id="cd07999">
    <property type="entry name" value="GH7_CBH_EG"/>
    <property type="match status" value="1"/>
</dbReference>
<dbReference type="FunFam" id="2.70.100.10:FF:000001">
    <property type="entry name" value="Glucanase"/>
    <property type="match status" value="1"/>
</dbReference>
<dbReference type="Gene3D" id="2.70.100.10">
    <property type="entry name" value="Glycoside hydrolase, family 7, domain"/>
    <property type="match status" value="1"/>
</dbReference>
<dbReference type="InterPro" id="IPR035971">
    <property type="entry name" value="CBD_sf"/>
</dbReference>
<dbReference type="InterPro" id="IPR000254">
    <property type="entry name" value="Cellulose-bd_dom_fun"/>
</dbReference>
<dbReference type="InterPro" id="IPR013320">
    <property type="entry name" value="ConA-like_dom_sf"/>
</dbReference>
<dbReference type="InterPro" id="IPR001722">
    <property type="entry name" value="Glyco_hydro_7"/>
</dbReference>
<dbReference type="InterPro" id="IPR037019">
    <property type="entry name" value="Glyco_hydro_7_sf"/>
</dbReference>
<dbReference type="PANTHER" id="PTHR33753">
    <property type="entry name" value="1,4-BETA-D-GLUCAN CELLOBIOHYDROLASE B"/>
    <property type="match status" value="1"/>
</dbReference>
<dbReference type="PANTHER" id="PTHR33753:SF2">
    <property type="entry name" value="GLYCOSIDE HYDROLASE FAMILY 7 PROTEIN"/>
    <property type="match status" value="1"/>
</dbReference>
<dbReference type="Pfam" id="PF00734">
    <property type="entry name" value="CBM_1"/>
    <property type="match status" value="1"/>
</dbReference>
<dbReference type="Pfam" id="PF00840">
    <property type="entry name" value="Glyco_hydro_7"/>
    <property type="match status" value="1"/>
</dbReference>
<dbReference type="PRINTS" id="PR00734">
    <property type="entry name" value="GLHYDRLASE7"/>
</dbReference>
<dbReference type="SMART" id="SM00236">
    <property type="entry name" value="fCBD"/>
    <property type="match status" value="1"/>
</dbReference>
<dbReference type="SUPFAM" id="SSF57180">
    <property type="entry name" value="Cellulose-binding domain"/>
    <property type="match status" value="1"/>
</dbReference>
<dbReference type="SUPFAM" id="SSF49899">
    <property type="entry name" value="Concanavalin A-like lectins/glucanases"/>
    <property type="match status" value="1"/>
</dbReference>
<dbReference type="PROSITE" id="PS00562">
    <property type="entry name" value="CBM1_1"/>
    <property type="match status" value="1"/>
</dbReference>
<dbReference type="PROSITE" id="PS51164">
    <property type="entry name" value="CBM1_2"/>
    <property type="match status" value="1"/>
</dbReference>
<accession>Q9P8P3</accession>
<gene>
    <name type="primary">cbh1</name>
</gene>
<keyword id="KW-0002">3D-structure</keyword>
<keyword id="KW-0119">Carbohydrate metabolism</keyword>
<keyword id="KW-0136">Cellulose degradation</keyword>
<keyword id="KW-1015">Disulfide bond</keyword>
<keyword id="KW-0325">Glycoprotein</keyword>
<keyword id="KW-0326">Glycosidase</keyword>
<keyword id="KW-0378">Hydrolase</keyword>
<keyword id="KW-0624">Polysaccharide degradation</keyword>
<keyword id="KW-0873">Pyrrolidone carboxylic acid</keyword>
<keyword id="KW-0964">Secreted</keyword>
<keyword id="KW-0732">Signal</keyword>
<name>GUX1_TRIHA</name>
<feature type="signal peptide" evidence="2">
    <location>
        <begin position="1"/>
        <end position="17"/>
    </location>
</feature>
<feature type="chain" id="PRO_0000007925" description="Exoglucanase 1">
    <location>
        <begin position="18"/>
        <end position="505"/>
    </location>
</feature>
<feature type="domain" description="CBM1" evidence="3">
    <location>
        <begin position="469"/>
        <end position="505"/>
    </location>
</feature>
<feature type="region of interest" description="Catalytic" evidence="8">
    <location>
        <begin position="18"/>
        <end position="449"/>
    </location>
</feature>
<feature type="region of interest" description="Disordered" evidence="4">
    <location>
        <begin position="399"/>
        <end position="423"/>
    </location>
</feature>
<feature type="region of interest" description="Disordered" evidence="4">
    <location>
        <begin position="440"/>
        <end position="472"/>
    </location>
</feature>
<feature type="region of interest" description="Linker" evidence="7">
    <location>
        <begin position="450"/>
        <end position="468"/>
    </location>
</feature>
<feature type="compositionally biased region" description="Polar residues" evidence="4">
    <location>
        <begin position="409"/>
        <end position="423"/>
    </location>
</feature>
<feature type="compositionally biased region" description="Low complexity" evidence="4">
    <location>
        <begin position="447"/>
        <end position="470"/>
    </location>
</feature>
<feature type="active site" description="Nucleophile" evidence="9">
    <location>
        <position position="225"/>
    </location>
</feature>
<feature type="active site" description="Proton donor/acceptor" evidence="9">
    <location>
        <position position="230"/>
    </location>
</feature>
<feature type="modified residue" description="Pyrrolidone carboxylic acid" evidence="6">
    <location>
        <position position="18"/>
    </location>
</feature>
<feature type="glycosylation site" description="N-linked (GlcNAc...) asparagine" evidence="2">
    <location>
        <position position="93"/>
    </location>
</feature>
<feature type="glycosylation site" description="N-linked (GlcNAc...) asparagine" evidence="6">
    <location>
        <position position="126"/>
    </location>
</feature>
<feature type="glycosylation site" description="N-linked (GlcNAc...) asparagine" evidence="6">
    <location>
        <position position="283"/>
    </location>
</feature>
<feature type="glycosylation site" description="N-linked (GlcNAc...) asparagine" evidence="6">
    <location>
        <position position="397"/>
    </location>
</feature>
<feature type="disulfide bond" evidence="6">
    <location>
        <begin position="21"/>
        <end position="88"/>
    </location>
</feature>
<feature type="disulfide bond" evidence="6">
    <location>
        <begin position="36"/>
        <end position="41"/>
    </location>
</feature>
<feature type="disulfide bond" evidence="6">
    <location>
        <begin position="66"/>
        <end position="87"/>
    </location>
</feature>
<feature type="disulfide bond" evidence="6">
    <location>
        <begin position="77"/>
        <end position="83"/>
    </location>
</feature>
<feature type="disulfide bond" evidence="6">
    <location>
        <begin position="151"/>
        <end position="410"/>
    </location>
</feature>
<feature type="disulfide bond" evidence="6">
    <location>
        <begin position="185"/>
        <end position="223"/>
    </location>
</feature>
<feature type="disulfide bond" evidence="6">
    <location>
        <begin position="189"/>
        <end position="222"/>
    </location>
</feature>
<feature type="disulfide bond" evidence="6">
    <location>
        <begin position="243"/>
        <end position="269"/>
    </location>
</feature>
<feature type="disulfide bond" evidence="6">
    <location>
        <begin position="251"/>
        <end position="256"/>
    </location>
</feature>
<feature type="disulfide bond" evidence="6">
    <location>
        <begin position="274"/>
        <end position="344"/>
    </location>
</feature>
<feature type="strand" evidence="11">
    <location>
        <begin position="30"/>
        <end position="37"/>
    </location>
</feature>
<feature type="strand" evidence="11">
    <location>
        <begin position="40"/>
        <end position="50"/>
    </location>
</feature>
<feature type="helix" evidence="11">
    <location>
        <begin position="52"/>
        <end position="54"/>
    </location>
</feature>
<feature type="strand" evidence="11">
    <location>
        <begin position="57"/>
        <end position="59"/>
    </location>
</feature>
<feature type="strand" evidence="11">
    <location>
        <begin position="65"/>
        <end position="68"/>
    </location>
</feature>
<feature type="turn" evidence="11">
    <location>
        <begin position="74"/>
        <end position="76"/>
    </location>
</feature>
<feature type="helix" evidence="11">
    <location>
        <begin position="80"/>
        <end position="86"/>
    </location>
</feature>
<feature type="strand" evidence="11">
    <location>
        <begin position="87"/>
        <end position="89"/>
    </location>
</feature>
<feature type="helix" evidence="11">
    <location>
        <begin position="94"/>
        <end position="98"/>
    </location>
</feature>
<feature type="strand" evidence="11">
    <location>
        <begin position="100"/>
        <end position="103"/>
    </location>
</feature>
<feature type="strand" evidence="11">
    <location>
        <begin position="106"/>
        <end position="113"/>
    </location>
</feature>
<feature type="strand" evidence="11">
    <location>
        <begin position="119"/>
        <end position="126"/>
    </location>
</feature>
<feature type="strand" evidence="11">
    <location>
        <begin position="138"/>
        <end position="145"/>
    </location>
</feature>
<feature type="strand" evidence="11">
    <location>
        <begin position="154"/>
        <end position="160"/>
    </location>
</feature>
<feature type="turn" evidence="11">
    <location>
        <begin position="164"/>
        <end position="170"/>
    </location>
</feature>
<feature type="helix" evidence="11">
    <location>
        <begin position="177"/>
        <end position="180"/>
    </location>
</feature>
<feature type="strand" evidence="11">
    <location>
        <begin position="194"/>
        <end position="196"/>
    </location>
</feature>
<feature type="strand" evidence="11">
    <location>
        <begin position="218"/>
        <end position="222"/>
    </location>
</feature>
<feature type="strand" evidence="11">
    <location>
        <begin position="225"/>
        <end position="231"/>
    </location>
</feature>
<feature type="strand" evidence="11">
    <location>
        <begin position="236"/>
        <end position="241"/>
    </location>
</feature>
<feature type="strand" evidence="11">
    <location>
        <begin position="243"/>
        <end position="247"/>
    </location>
</feature>
<feature type="strand" evidence="11">
    <location>
        <begin position="249"/>
        <end position="252"/>
    </location>
</feature>
<feature type="helix" evidence="11">
    <location>
        <begin position="253"/>
        <end position="256"/>
    </location>
</feature>
<feature type="strand" evidence="10">
    <location>
        <begin position="258"/>
        <end position="262"/>
    </location>
</feature>
<feature type="strand" evidence="11">
    <location>
        <begin position="266"/>
        <end position="269"/>
    </location>
</feature>
<feature type="turn" evidence="11">
    <location>
        <begin position="278"/>
        <end position="282"/>
    </location>
</feature>
<feature type="strand" evidence="11">
    <location>
        <begin position="286"/>
        <end position="290"/>
    </location>
</feature>
<feature type="strand" evidence="11">
    <location>
        <begin position="293"/>
        <end position="296"/>
    </location>
</feature>
<feature type="strand" evidence="11">
    <location>
        <begin position="301"/>
        <end position="307"/>
    </location>
</feature>
<feature type="strand" evidence="11">
    <location>
        <begin position="313"/>
        <end position="319"/>
    </location>
</feature>
<feature type="strand" evidence="11">
    <location>
        <begin position="322"/>
        <end position="325"/>
    </location>
</feature>
<feature type="strand" evidence="11">
    <location>
        <begin position="329"/>
        <end position="331"/>
    </location>
</feature>
<feature type="strand" evidence="11">
    <location>
        <begin position="334"/>
        <end position="340"/>
    </location>
</feature>
<feature type="helix" evidence="11">
    <location>
        <begin position="341"/>
        <end position="351"/>
    </location>
</feature>
<feature type="helix" evidence="11">
    <location>
        <begin position="355"/>
        <end position="358"/>
    </location>
</feature>
<feature type="helix" evidence="11">
    <location>
        <begin position="361"/>
        <end position="370"/>
    </location>
</feature>
<feature type="strand" evidence="11">
    <location>
        <begin position="373"/>
        <end position="380"/>
    </location>
</feature>
<feature type="turn" evidence="11">
    <location>
        <begin position="383"/>
        <end position="387"/>
    </location>
</feature>
<feature type="helix" evidence="11">
    <location>
        <begin position="388"/>
        <end position="391"/>
    </location>
</feature>
<feature type="strand" evidence="10">
    <location>
        <begin position="408"/>
        <end position="410"/>
    </location>
</feature>
<feature type="turn" evidence="10">
    <location>
        <begin position="412"/>
        <end position="415"/>
    </location>
</feature>
<feature type="helix" evidence="11">
    <location>
        <begin position="417"/>
        <end position="423"/>
    </location>
</feature>
<feature type="strand" evidence="11">
    <location>
        <begin position="428"/>
        <end position="438"/>
    </location>
</feature>
<organism>
    <name type="scientific">Trichoderma harzianum</name>
    <name type="common">Hypocrea lixii</name>
    <dbReference type="NCBI Taxonomy" id="5544"/>
    <lineage>
        <taxon>Eukaryota</taxon>
        <taxon>Fungi</taxon>
        <taxon>Dikarya</taxon>
        <taxon>Ascomycota</taxon>
        <taxon>Pezizomycotina</taxon>
        <taxon>Sordariomycetes</taxon>
        <taxon>Hypocreomycetidae</taxon>
        <taxon>Hypocreales</taxon>
        <taxon>Hypocreaceae</taxon>
        <taxon>Trichoderma</taxon>
    </lineage>
</organism>
<protein>
    <recommendedName>
        <fullName>Exoglucanase 1</fullName>
        <ecNumber>3.2.1.91</ecNumber>
    </recommendedName>
    <alternativeName>
        <fullName>1,4-beta-cellobiohydrolase</fullName>
    </alternativeName>
    <alternativeName>
        <fullName>Cellobiohydrolase 7A</fullName>
        <shortName>Cel7A</shortName>
    </alternativeName>
    <alternativeName>
        <fullName>Exocellobiohydrolase I</fullName>
        <shortName>CBHI</shortName>
    </alternativeName>
    <alternativeName>
        <fullName>Exoglucanase I</fullName>
    </alternativeName>
</protein>
<evidence type="ECO:0000250" key="1">
    <source>
        <dbReference type="UniProtKB" id="P62694"/>
    </source>
</evidence>
<evidence type="ECO:0000255" key="2"/>
<evidence type="ECO:0000255" key="3">
    <source>
        <dbReference type="PROSITE-ProRule" id="PRU00597"/>
    </source>
</evidence>
<evidence type="ECO:0000256" key="4">
    <source>
        <dbReference type="SAM" id="MobiDB-lite"/>
    </source>
</evidence>
<evidence type="ECO:0000269" key="5">
    <source>
    </source>
</evidence>
<evidence type="ECO:0000269" key="6">
    <source>
    </source>
</evidence>
<evidence type="ECO:0000305" key="7"/>
<evidence type="ECO:0000305" key="8">
    <source>
    </source>
</evidence>
<evidence type="ECO:0000305" key="9">
    <source>
    </source>
</evidence>
<evidence type="ECO:0007829" key="10">
    <source>
        <dbReference type="PDB" id="2Y9N"/>
    </source>
</evidence>
<evidence type="ECO:0007829" key="11">
    <source>
        <dbReference type="PDB" id="2YOK"/>
    </source>
</evidence>
<sequence>MYRKLAVISAFLAAARAQQVCTQQAETHPPLTWQKCTASGCTPQQGSVVLDANWRWTHDTKSTTNCYDGNTWSSTLCPDDATCAKNCCLDGANYSGTYGVTTSGDALTLQFVTASNVGSRLYLMANDSTYQEFTLSGNEFSFDVDVSQLPCGLNGALYFVSMDADGGQSKYPGNAAGAKYGTGYCDSQCPRDLKFINGQANVEGWEPSSNNANTGVGGHGSCCSEMDIWEANSISEALTPHPCETVGQTMCSGDSCGGTYSNDRYGGTCDPDGCDWNPYRLGNTSFYGPGSSFALDTTKKLTVVTQFATDGSISRYYVQNGVKFQQPNAQVGSYSGNTINTDYCAAEQTAFGGTSFTDKGGLAQINKAFQGGMVLVMSLWDDYAVNMLWLDSTYPTNATASTPGAKRGSCSTSSGVPAQVEAQSPNSKVIYSNIRFGPIGSTGGNTGSNPPGTSTTRAPPSSTGSSPTATQTHYGQCGGTGWTGPTRCASGYTCQVLNPFYSQCL</sequence>
<proteinExistence type="evidence at protein level"/>